<organism>
    <name type="scientific">Neisseria meningitidis serogroup A / serotype 4A (strain DSM 15465 / Z2491)</name>
    <dbReference type="NCBI Taxonomy" id="122587"/>
    <lineage>
        <taxon>Bacteria</taxon>
        <taxon>Pseudomonadati</taxon>
        <taxon>Pseudomonadota</taxon>
        <taxon>Betaproteobacteria</taxon>
        <taxon>Neisseriales</taxon>
        <taxon>Neisseriaceae</taxon>
        <taxon>Neisseria</taxon>
    </lineage>
</organism>
<name>CAPP_NEIMA</name>
<sequence length="900" mass="101071">MQLHILNNPKDAALAADAEFLKQSLFNLLHEEASPLVVETVKLLSTSDDSAALIEKVLPQLDEQQTHDLTLACGLFAQILNIAEDVHHERRRQIHEEAGRGGAEGSLTETVRRLKAGKADGKSVQRQLDNTSVTAVLTAHPTEVQRQTVLNFNRRIRALLPQRERCTNADALARLRREIDTILLGLWQTSETRRHKLSVNDEINNGVSIFPMSFFEALPKLYRKMEHDFQTAYPDVRVPDILKIGGWIGGDRDGNPFVSAETLRFAFRRHADAVFRFYRGELDKLYRELPLSIRRVKVNGDVMALSDKSPDEETARAEEPYRRAIAYIMARAMGKARALGLGMGCKFGFLEPYASAQEFLDDLKKLQHSLIDNGSRLLAEGRLADLIRSVSVFGFHMMPLDLRQHAGKHADVVAELFQHAGLEDYNSLNEEQKQAALLRELSHQRPLYSPFITYSDHTRHELAIFNEARKIKDEFGEDAVTQSIISNCEQPSDLLALALLLKETGLLAVENGKPKSRINIVPLFETIEALENACPVMETMFRLDWYGALLESRGNIQEIMLGYSDSNKDGGYVTSSWCLYQAELGLVELFKKYDVRMRLFHGRGGSVGRGGGPSYQAILAQPAGSVAGQIRITEQGEVITAKYADPGNAQRNLETLVAATLEASILPDKKDPDAKLMQDLSDVSFKYYRELITHPDFIDYFLQTSPIQEIATLNLGSRPASRKTLARIQDLRAIPWVFSWMQNRLMLPAWYGFGSAVETLCEGNPDTLAALREHAQSNPFFQAMLSNMEQVMAKTDITLAENYAGLSESPDKAKVIFGMIKEEYRRSRKALLDLLQTEELLRDNRSLARSLALRIPYLNALNGLQVAMLKRLRKEPDNPHALLMVHLTINGVAQGLRNTG</sequence>
<protein>
    <recommendedName>
        <fullName evidence="1">Phosphoenolpyruvate carboxylase</fullName>
        <shortName evidence="1">PEPC</shortName>
        <shortName evidence="1">PEPCase</shortName>
        <ecNumber evidence="1">4.1.1.31</ecNumber>
    </recommendedName>
</protein>
<dbReference type="EC" id="4.1.1.31" evidence="1"/>
<dbReference type="EMBL" id="AL157959">
    <property type="protein sequence ID" value="CAM07667.1"/>
    <property type="status" value="ALT_INIT"/>
    <property type="molecule type" value="Genomic_DNA"/>
</dbReference>
<dbReference type="RefSeq" id="WP_002247188.1">
    <property type="nucleotide sequence ID" value="NC_003116.1"/>
</dbReference>
<dbReference type="SMR" id="Q9JWH1"/>
<dbReference type="EnsemblBacteria" id="CAM07667">
    <property type="protein sequence ID" value="CAM07667"/>
    <property type="gene ID" value="NMA0374"/>
</dbReference>
<dbReference type="KEGG" id="nma:NMA0374"/>
<dbReference type="HOGENOM" id="CLU_006557_2_0_4"/>
<dbReference type="Proteomes" id="UP000000626">
    <property type="component" value="Chromosome"/>
</dbReference>
<dbReference type="GO" id="GO:0005829">
    <property type="term" value="C:cytosol"/>
    <property type="evidence" value="ECO:0007669"/>
    <property type="project" value="TreeGrafter"/>
</dbReference>
<dbReference type="GO" id="GO:0000287">
    <property type="term" value="F:magnesium ion binding"/>
    <property type="evidence" value="ECO:0007669"/>
    <property type="project" value="UniProtKB-UniRule"/>
</dbReference>
<dbReference type="GO" id="GO:0008964">
    <property type="term" value="F:phosphoenolpyruvate carboxylase activity"/>
    <property type="evidence" value="ECO:0007669"/>
    <property type="project" value="UniProtKB-UniRule"/>
</dbReference>
<dbReference type="GO" id="GO:0015977">
    <property type="term" value="P:carbon fixation"/>
    <property type="evidence" value="ECO:0007669"/>
    <property type="project" value="UniProtKB-UniRule"/>
</dbReference>
<dbReference type="GO" id="GO:0006107">
    <property type="term" value="P:oxaloacetate metabolic process"/>
    <property type="evidence" value="ECO:0007669"/>
    <property type="project" value="UniProtKB-UniRule"/>
</dbReference>
<dbReference type="GO" id="GO:0006099">
    <property type="term" value="P:tricarboxylic acid cycle"/>
    <property type="evidence" value="ECO:0007669"/>
    <property type="project" value="InterPro"/>
</dbReference>
<dbReference type="Gene3D" id="1.20.1440.90">
    <property type="entry name" value="Phosphoenolpyruvate/pyruvate domain"/>
    <property type="match status" value="1"/>
</dbReference>
<dbReference type="HAMAP" id="MF_00595">
    <property type="entry name" value="PEPcase_type1"/>
    <property type="match status" value="1"/>
</dbReference>
<dbReference type="InterPro" id="IPR021135">
    <property type="entry name" value="PEP_COase"/>
</dbReference>
<dbReference type="InterPro" id="IPR022805">
    <property type="entry name" value="PEP_COase_bac/pln-type"/>
</dbReference>
<dbReference type="InterPro" id="IPR018129">
    <property type="entry name" value="PEP_COase_Lys_AS"/>
</dbReference>
<dbReference type="InterPro" id="IPR033129">
    <property type="entry name" value="PEPCASE_His_AS"/>
</dbReference>
<dbReference type="InterPro" id="IPR015813">
    <property type="entry name" value="Pyrv/PenolPyrv_kinase-like_dom"/>
</dbReference>
<dbReference type="NCBIfam" id="NF000584">
    <property type="entry name" value="PRK00009.1"/>
    <property type="match status" value="1"/>
</dbReference>
<dbReference type="PANTHER" id="PTHR30523">
    <property type="entry name" value="PHOSPHOENOLPYRUVATE CARBOXYLASE"/>
    <property type="match status" value="1"/>
</dbReference>
<dbReference type="PANTHER" id="PTHR30523:SF6">
    <property type="entry name" value="PHOSPHOENOLPYRUVATE CARBOXYLASE"/>
    <property type="match status" value="1"/>
</dbReference>
<dbReference type="Pfam" id="PF00311">
    <property type="entry name" value="PEPcase"/>
    <property type="match status" value="1"/>
</dbReference>
<dbReference type="PRINTS" id="PR00150">
    <property type="entry name" value="PEPCARBXLASE"/>
</dbReference>
<dbReference type="SUPFAM" id="SSF51621">
    <property type="entry name" value="Phosphoenolpyruvate/pyruvate domain"/>
    <property type="match status" value="1"/>
</dbReference>
<dbReference type="PROSITE" id="PS00781">
    <property type="entry name" value="PEPCASE_1"/>
    <property type="match status" value="1"/>
</dbReference>
<dbReference type="PROSITE" id="PS00393">
    <property type="entry name" value="PEPCASE_2"/>
    <property type="match status" value="1"/>
</dbReference>
<proteinExistence type="inferred from homology"/>
<gene>
    <name evidence="1" type="primary">ppc</name>
    <name type="ordered locus">NMA0374</name>
</gene>
<comment type="function">
    <text evidence="1">Forms oxaloacetate, a four-carbon dicarboxylic acid source for the tricarboxylic acid cycle.</text>
</comment>
<comment type="catalytic activity">
    <reaction evidence="1">
        <text>oxaloacetate + phosphate = phosphoenolpyruvate + hydrogencarbonate</text>
        <dbReference type="Rhea" id="RHEA:28370"/>
        <dbReference type="ChEBI" id="CHEBI:16452"/>
        <dbReference type="ChEBI" id="CHEBI:17544"/>
        <dbReference type="ChEBI" id="CHEBI:43474"/>
        <dbReference type="ChEBI" id="CHEBI:58702"/>
        <dbReference type="EC" id="4.1.1.31"/>
    </reaction>
</comment>
<comment type="cofactor">
    <cofactor evidence="1">
        <name>Mg(2+)</name>
        <dbReference type="ChEBI" id="CHEBI:18420"/>
    </cofactor>
</comment>
<comment type="similarity">
    <text evidence="1">Belongs to the PEPCase type 1 family.</text>
</comment>
<comment type="sequence caution" evidence="2">
    <conflict type="erroneous initiation">
        <sequence resource="EMBL-CDS" id="CAM07667"/>
    </conflict>
</comment>
<keyword id="KW-0120">Carbon dioxide fixation</keyword>
<keyword id="KW-0456">Lyase</keyword>
<keyword id="KW-0460">Magnesium</keyword>
<accession>Q9JWH1</accession>
<accession>A1IPJ7</accession>
<reference key="1">
    <citation type="journal article" date="2000" name="Nature">
        <title>Complete DNA sequence of a serogroup A strain of Neisseria meningitidis Z2491.</title>
        <authorList>
            <person name="Parkhill J."/>
            <person name="Achtman M."/>
            <person name="James K.D."/>
            <person name="Bentley S.D."/>
            <person name="Churcher C.M."/>
            <person name="Klee S.R."/>
            <person name="Morelli G."/>
            <person name="Basham D."/>
            <person name="Brown D."/>
            <person name="Chillingworth T."/>
            <person name="Davies R.M."/>
            <person name="Davis P."/>
            <person name="Devlin K."/>
            <person name="Feltwell T."/>
            <person name="Hamlin N."/>
            <person name="Holroyd S."/>
            <person name="Jagels K."/>
            <person name="Leather S."/>
            <person name="Moule S."/>
            <person name="Mungall K.L."/>
            <person name="Quail M.A."/>
            <person name="Rajandream M.A."/>
            <person name="Rutherford K.M."/>
            <person name="Simmonds M."/>
            <person name="Skelton J."/>
            <person name="Whitehead S."/>
            <person name="Spratt B.G."/>
            <person name="Barrell B.G."/>
        </authorList>
    </citation>
    <scope>NUCLEOTIDE SEQUENCE [LARGE SCALE GENOMIC DNA]</scope>
    <source>
        <strain>DSM 15465 / Z2491</strain>
    </source>
</reference>
<feature type="chain" id="PRO_0000166603" description="Phosphoenolpyruvate carboxylase">
    <location>
        <begin position="1"/>
        <end position="900"/>
    </location>
</feature>
<feature type="active site" evidence="1">
    <location>
        <position position="140"/>
    </location>
</feature>
<feature type="active site" evidence="1">
    <location>
        <position position="568"/>
    </location>
</feature>
<evidence type="ECO:0000255" key="1">
    <source>
        <dbReference type="HAMAP-Rule" id="MF_00595"/>
    </source>
</evidence>
<evidence type="ECO:0000305" key="2"/>